<dbReference type="EC" id="2.1.1.177" evidence="1"/>
<dbReference type="EMBL" id="CP000884">
    <property type="protein sequence ID" value="ABX36161.1"/>
    <property type="molecule type" value="Genomic_DNA"/>
</dbReference>
<dbReference type="RefSeq" id="WP_012205361.1">
    <property type="nucleotide sequence ID" value="NC_010002.1"/>
</dbReference>
<dbReference type="SMR" id="A9BWE1"/>
<dbReference type="STRING" id="398578.Daci_3525"/>
<dbReference type="GeneID" id="94692694"/>
<dbReference type="KEGG" id="dac:Daci_3525"/>
<dbReference type="eggNOG" id="COG1576">
    <property type="taxonomic scope" value="Bacteria"/>
</dbReference>
<dbReference type="HOGENOM" id="CLU_100552_1_0_4"/>
<dbReference type="Proteomes" id="UP000000784">
    <property type="component" value="Chromosome"/>
</dbReference>
<dbReference type="GO" id="GO:0005737">
    <property type="term" value="C:cytoplasm"/>
    <property type="evidence" value="ECO:0007669"/>
    <property type="project" value="UniProtKB-SubCell"/>
</dbReference>
<dbReference type="GO" id="GO:0070038">
    <property type="term" value="F:rRNA (pseudouridine-N3-)-methyltransferase activity"/>
    <property type="evidence" value="ECO:0007669"/>
    <property type="project" value="UniProtKB-UniRule"/>
</dbReference>
<dbReference type="CDD" id="cd18081">
    <property type="entry name" value="RlmH-like"/>
    <property type="match status" value="1"/>
</dbReference>
<dbReference type="Gene3D" id="3.40.1280.10">
    <property type="match status" value="1"/>
</dbReference>
<dbReference type="HAMAP" id="MF_00658">
    <property type="entry name" value="23SrRNA_methyltr_H"/>
    <property type="match status" value="1"/>
</dbReference>
<dbReference type="InterPro" id="IPR029028">
    <property type="entry name" value="Alpha/beta_knot_MTases"/>
</dbReference>
<dbReference type="InterPro" id="IPR003742">
    <property type="entry name" value="RlmH-like"/>
</dbReference>
<dbReference type="InterPro" id="IPR029026">
    <property type="entry name" value="tRNA_m1G_MTases_N"/>
</dbReference>
<dbReference type="NCBIfam" id="NF000986">
    <property type="entry name" value="PRK00103.1-4"/>
    <property type="match status" value="1"/>
</dbReference>
<dbReference type="PANTHER" id="PTHR33603">
    <property type="entry name" value="METHYLTRANSFERASE"/>
    <property type="match status" value="1"/>
</dbReference>
<dbReference type="PANTHER" id="PTHR33603:SF1">
    <property type="entry name" value="RIBOSOMAL RNA LARGE SUBUNIT METHYLTRANSFERASE H"/>
    <property type="match status" value="1"/>
</dbReference>
<dbReference type="Pfam" id="PF02590">
    <property type="entry name" value="SPOUT_MTase"/>
    <property type="match status" value="1"/>
</dbReference>
<dbReference type="PIRSF" id="PIRSF004505">
    <property type="entry name" value="MT_bac"/>
    <property type="match status" value="1"/>
</dbReference>
<dbReference type="SUPFAM" id="SSF75217">
    <property type="entry name" value="alpha/beta knot"/>
    <property type="match status" value="1"/>
</dbReference>
<keyword id="KW-0963">Cytoplasm</keyword>
<keyword id="KW-0489">Methyltransferase</keyword>
<keyword id="KW-1185">Reference proteome</keyword>
<keyword id="KW-0698">rRNA processing</keyword>
<keyword id="KW-0949">S-adenosyl-L-methionine</keyword>
<keyword id="KW-0808">Transferase</keyword>
<proteinExistence type="inferred from homology"/>
<name>RLMH_DELAS</name>
<gene>
    <name evidence="1" type="primary">rlmH</name>
    <name type="ordered locus">Daci_3525</name>
</gene>
<reference key="1">
    <citation type="submission" date="2007-11" db="EMBL/GenBank/DDBJ databases">
        <title>Complete sequence of Delftia acidovorans DSM 14801 / SPH-1.</title>
        <authorList>
            <person name="Copeland A."/>
            <person name="Lucas S."/>
            <person name="Lapidus A."/>
            <person name="Barry K."/>
            <person name="Glavina del Rio T."/>
            <person name="Dalin E."/>
            <person name="Tice H."/>
            <person name="Pitluck S."/>
            <person name="Lowry S."/>
            <person name="Clum A."/>
            <person name="Schmutz J."/>
            <person name="Larimer F."/>
            <person name="Land M."/>
            <person name="Hauser L."/>
            <person name="Kyrpides N."/>
            <person name="Kim E."/>
            <person name="Schleheck D."/>
            <person name="Richardson P."/>
        </authorList>
    </citation>
    <scope>NUCLEOTIDE SEQUENCE [LARGE SCALE GENOMIC DNA]</scope>
    <source>
        <strain>DSM 14801 / SPH-1</strain>
    </source>
</reference>
<feature type="chain" id="PRO_0000366587" description="Ribosomal RNA large subunit methyltransferase H">
    <location>
        <begin position="1"/>
        <end position="155"/>
    </location>
</feature>
<feature type="binding site" evidence="1">
    <location>
        <position position="72"/>
    </location>
    <ligand>
        <name>S-adenosyl-L-methionine</name>
        <dbReference type="ChEBI" id="CHEBI:59789"/>
    </ligand>
</feature>
<feature type="binding site" evidence="1">
    <location>
        <position position="103"/>
    </location>
    <ligand>
        <name>S-adenosyl-L-methionine</name>
        <dbReference type="ChEBI" id="CHEBI:59789"/>
    </ligand>
</feature>
<feature type="binding site" evidence="1">
    <location>
        <begin position="122"/>
        <end position="127"/>
    </location>
    <ligand>
        <name>S-adenosyl-L-methionine</name>
        <dbReference type="ChEBI" id="CHEBI:59789"/>
    </ligand>
</feature>
<accession>A9BWE1</accession>
<organism>
    <name type="scientific">Delftia acidovorans (strain DSM 14801 / SPH-1)</name>
    <dbReference type="NCBI Taxonomy" id="398578"/>
    <lineage>
        <taxon>Bacteria</taxon>
        <taxon>Pseudomonadati</taxon>
        <taxon>Pseudomonadota</taxon>
        <taxon>Betaproteobacteria</taxon>
        <taxon>Burkholderiales</taxon>
        <taxon>Comamonadaceae</taxon>
        <taxon>Delftia</taxon>
    </lineage>
</organism>
<protein>
    <recommendedName>
        <fullName evidence="1">Ribosomal RNA large subunit methyltransferase H</fullName>
        <ecNumber evidence="1">2.1.1.177</ecNumber>
    </recommendedName>
    <alternativeName>
        <fullName evidence="1">23S rRNA (pseudouridine1915-N3)-methyltransferase</fullName>
    </alternativeName>
    <alternativeName>
        <fullName evidence="1">23S rRNA m3Psi1915 methyltransferase</fullName>
    </alternativeName>
    <alternativeName>
        <fullName evidence="1">rRNA (pseudouridine-N3-)-methyltransferase RlmH</fullName>
    </alternativeName>
</protein>
<comment type="function">
    <text evidence="1">Specifically methylates the pseudouridine at position 1915 (m3Psi1915) in 23S rRNA.</text>
</comment>
<comment type="catalytic activity">
    <reaction evidence="1">
        <text>pseudouridine(1915) in 23S rRNA + S-adenosyl-L-methionine = N(3)-methylpseudouridine(1915) in 23S rRNA + S-adenosyl-L-homocysteine + H(+)</text>
        <dbReference type="Rhea" id="RHEA:42752"/>
        <dbReference type="Rhea" id="RHEA-COMP:10221"/>
        <dbReference type="Rhea" id="RHEA-COMP:10222"/>
        <dbReference type="ChEBI" id="CHEBI:15378"/>
        <dbReference type="ChEBI" id="CHEBI:57856"/>
        <dbReference type="ChEBI" id="CHEBI:59789"/>
        <dbReference type="ChEBI" id="CHEBI:65314"/>
        <dbReference type="ChEBI" id="CHEBI:74486"/>
        <dbReference type="EC" id="2.1.1.177"/>
    </reaction>
</comment>
<comment type="subunit">
    <text evidence="1">Homodimer.</text>
</comment>
<comment type="subcellular location">
    <subcellularLocation>
        <location evidence="1">Cytoplasm</location>
    </subcellularLocation>
</comment>
<comment type="similarity">
    <text evidence="1">Belongs to the RNA methyltransferase RlmH family.</text>
</comment>
<sequence length="155" mass="17455">MKLLIVAVGQHVPDWAQTAYDDYAKRFPPELKVELKAVKTEPRGSKTVETLYAAERKRIEAAIPRGTRIVVLDERGTNLTTKALAQRLQGWQLEGDDVALIIGGPDGLDPAFRQAAHERIRLSDLTLPHAMVRVLLIEQLYRAWSVNAGHPYHRE</sequence>
<evidence type="ECO:0000255" key="1">
    <source>
        <dbReference type="HAMAP-Rule" id="MF_00658"/>
    </source>
</evidence>